<name>ASPA_ARATH</name>
<reference key="1">
    <citation type="journal article" date="2000" name="Nature">
        <title>Sequence and analysis of chromosome 5 of the plant Arabidopsis thaliana.</title>
        <authorList>
            <person name="Tabata S."/>
            <person name="Kaneko T."/>
            <person name="Nakamura Y."/>
            <person name="Kotani H."/>
            <person name="Kato T."/>
            <person name="Asamizu E."/>
            <person name="Miyajima N."/>
            <person name="Sasamoto S."/>
            <person name="Kimura T."/>
            <person name="Hosouchi T."/>
            <person name="Kawashima K."/>
            <person name="Kohara M."/>
            <person name="Matsumoto M."/>
            <person name="Matsuno A."/>
            <person name="Muraki A."/>
            <person name="Nakayama S."/>
            <person name="Nakazaki N."/>
            <person name="Naruo K."/>
            <person name="Okumura S."/>
            <person name="Shinpo S."/>
            <person name="Takeuchi C."/>
            <person name="Wada T."/>
            <person name="Watanabe A."/>
            <person name="Yamada M."/>
            <person name="Yasuda M."/>
            <person name="Sato S."/>
            <person name="de la Bastide M."/>
            <person name="Huang E."/>
            <person name="Spiegel L."/>
            <person name="Gnoj L."/>
            <person name="O'Shaughnessy A."/>
            <person name="Preston R."/>
            <person name="Habermann K."/>
            <person name="Murray J."/>
            <person name="Johnson D."/>
            <person name="Rohlfing T."/>
            <person name="Nelson J."/>
            <person name="Stoneking T."/>
            <person name="Pepin K."/>
            <person name="Spieth J."/>
            <person name="Sekhon M."/>
            <person name="Armstrong J."/>
            <person name="Becker M."/>
            <person name="Belter E."/>
            <person name="Cordum H."/>
            <person name="Cordes M."/>
            <person name="Courtney L."/>
            <person name="Courtney W."/>
            <person name="Dante M."/>
            <person name="Du H."/>
            <person name="Edwards J."/>
            <person name="Fryman J."/>
            <person name="Haakensen B."/>
            <person name="Lamar E."/>
            <person name="Latreille P."/>
            <person name="Leonard S."/>
            <person name="Meyer R."/>
            <person name="Mulvaney E."/>
            <person name="Ozersky P."/>
            <person name="Riley A."/>
            <person name="Strowmatt C."/>
            <person name="Wagner-McPherson C."/>
            <person name="Wollam A."/>
            <person name="Yoakum M."/>
            <person name="Bell M."/>
            <person name="Dedhia N."/>
            <person name="Parnell L."/>
            <person name="Shah R."/>
            <person name="Rodriguez M."/>
            <person name="Hoon See L."/>
            <person name="Vil D."/>
            <person name="Baker J."/>
            <person name="Kirchoff K."/>
            <person name="Toth K."/>
            <person name="King L."/>
            <person name="Bahret A."/>
            <person name="Miller B."/>
            <person name="Marra M.A."/>
            <person name="Martienssen R."/>
            <person name="McCombie W.R."/>
            <person name="Wilson R.K."/>
            <person name="Murphy G."/>
            <person name="Bancroft I."/>
            <person name="Volckaert G."/>
            <person name="Wambutt R."/>
            <person name="Duesterhoeft A."/>
            <person name="Stiekema W."/>
            <person name="Pohl T."/>
            <person name="Entian K.-D."/>
            <person name="Terryn N."/>
            <person name="Hartley N."/>
            <person name="Bent E."/>
            <person name="Johnson S."/>
            <person name="Langham S.-A."/>
            <person name="McCullagh B."/>
            <person name="Robben J."/>
            <person name="Grymonprez B."/>
            <person name="Zimmermann W."/>
            <person name="Ramsperger U."/>
            <person name="Wedler H."/>
            <person name="Balke K."/>
            <person name="Wedler E."/>
            <person name="Peters S."/>
            <person name="van Staveren M."/>
            <person name="Dirkse W."/>
            <person name="Mooijman P."/>
            <person name="Klein Lankhorst R."/>
            <person name="Weitzenegger T."/>
            <person name="Bothe G."/>
            <person name="Rose M."/>
            <person name="Hauf J."/>
            <person name="Berneiser S."/>
            <person name="Hempel S."/>
            <person name="Feldpausch M."/>
            <person name="Lamberth S."/>
            <person name="Villarroel R."/>
            <person name="Gielen J."/>
            <person name="Ardiles W."/>
            <person name="Bents O."/>
            <person name="Lemcke K."/>
            <person name="Kolesov G."/>
            <person name="Mayer K.F.X."/>
            <person name="Rudd S."/>
            <person name="Schoof H."/>
            <person name="Schueller C."/>
            <person name="Zaccaria P."/>
            <person name="Mewes H.-W."/>
            <person name="Bevan M."/>
            <person name="Fransz P.F."/>
        </authorList>
    </citation>
    <scope>NUCLEOTIDE SEQUENCE [LARGE SCALE GENOMIC DNA]</scope>
    <source>
        <strain>cv. Columbia</strain>
    </source>
</reference>
<reference key="2">
    <citation type="journal article" date="2017" name="Plant J.">
        <title>Araport11: a complete reannotation of the Arabidopsis thaliana reference genome.</title>
        <authorList>
            <person name="Cheng C.Y."/>
            <person name="Krishnakumar V."/>
            <person name="Chan A.P."/>
            <person name="Thibaud-Nissen F."/>
            <person name="Schobel S."/>
            <person name="Town C.D."/>
        </authorList>
    </citation>
    <scope>GENOME REANNOTATION</scope>
    <source>
        <strain>cv. Columbia</strain>
    </source>
</reference>
<reference key="3">
    <citation type="journal article" date="2003" name="Science">
        <title>Empirical analysis of transcriptional activity in the Arabidopsis genome.</title>
        <authorList>
            <person name="Yamada K."/>
            <person name="Lim J."/>
            <person name="Dale J.M."/>
            <person name="Chen H."/>
            <person name="Shinn P."/>
            <person name="Palm C.J."/>
            <person name="Southwick A.M."/>
            <person name="Wu H.C."/>
            <person name="Kim C.J."/>
            <person name="Nguyen M."/>
            <person name="Pham P.K."/>
            <person name="Cheuk R.F."/>
            <person name="Karlin-Newmann G."/>
            <person name="Liu S.X."/>
            <person name="Lam B."/>
            <person name="Sakano H."/>
            <person name="Wu T."/>
            <person name="Yu G."/>
            <person name="Miranda M."/>
            <person name="Quach H.L."/>
            <person name="Tripp M."/>
            <person name="Chang C.H."/>
            <person name="Lee J.M."/>
            <person name="Toriumi M.J."/>
            <person name="Chan M.M."/>
            <person name="Tang C.C."/>
            <person name="Onodera C.S."/>
            <person name="Deng J.M."/>
            <person name="Akiyama K."/>
            <person name="Ansari Y."/>
            <person name="Arakawa T."/>
            <person name="Banh J."/>
            <person name="Banno F."/>
            <person name="Bowser L."/>
            <person name="Brooks S.Y."/>
            <person name="Carninci P."/>
            <person name="Chao Q."/>
            <person name="Choy N."/>
            <person name="Enju A."/>
            <person name="Goldsmith A.D."/>
            <person name="Gurjal M."/>
            <person name="Hansen N.F."/>
            <person name="Hayashizaki Y."/>
            <person name="Johnson-Hopson C."/>
            <person name="Hsuan V.W."/>
            <person name="Iida K."/>
            <person name="Karnes M."/>
            <person name="Khan S."/>
            <person name="Koesema E."/>
            <person name="Ishida J."/>
            <person name="Jiang P.X."/>
            <person name="Jones T."/>
            <person name="Kawai J."/>
            <person name="Kamiya A."/>
            <person name="Meyers C."/>
            <person name="Nakajima M."/>
            <person name="Narusaka M."/>
            <person name="Seki M."/>
            <person name="Sakurai T."/>
            <person name="Satou M."/>
            <person name="Tamse R."/>
            <person name="Vaysberg M."/>
            <person name="Wallender E.K."/>
            <person name="Wong C."/>
            <person name="Yamamura Y."/>
            <person name="Yuan S."/>
            <person name="Shinozaki K."/>
            <person name="Davis R.W."/>
            <person name="Theologis A."/>
            <person name="Ecker J.R."/>
        </authorList>
    </citation>
    <scope>NUCLEOTIDE SEQUENCE [LARGE SCALE MRNA]</scope>
    <source>
        <strain>cv. Columbia</strain>
    </source>
</reference>
<reference key="4">
    <citation type="journal article" date="2014" name="Plant Physiol.">
        <title>Contrasting roles of the apoplastic aspartyl protease APOPLASTIC, ENHANCED DISEASE SUSCEPTIBILITY1-DEPENDENT1 and LEGUME LECTIN-LIKE PROTEIN1 in Arabidopsis systemic acquired resistance.</title>
        <authorList>
            <person name="Breitenbach H.H."/>
            <person name="Wenig M."/>
            <person name="Wittek F."/>
            <person name="Jorda L."/>
            <person name="Maldonado-Alconada A.M."/>
            <person name="Sarioglu H."/>
            <person name="Colby T."/>
            <person name="Knappe C."/>
            <person name="Bichlmeier M."/>
            <person name="Pabst E."/>
            <person name="Mackey D."/>
            <person name="Parker J.E."/>
            <person name="Vlot A.C."/>
        </authorList>
    </citation>
    <scope>FUNCTION</scope>
    <scope>INDUCTION</scope>
</reference>
<organism evidence="6">
    <name type="scientific">Arabidopsis thaliana</name>
    <name type="common">Mouse-ear cress</name>
    <dbReference type="NCBI Taxonomy" id="3702"/>
    <lineage>
        <taxon>Eukaryota</taxon>
        <taxon>Viridiplantae</taxon>
        <taxon>Streptophyta</taxon>
        <taxon>Embryophyta</taxon>
        <taxon>Tracheophyta</taxon>
        <taxon>Spermatophyta</taxon>
        <taxon>Magnoliopsida</taxon>
        <taxon>eudicotyledons</taxon>
        <taxon>Gunneridae</taxon>
        <taxon>Pentapetalae</taxon>
        <taxon>rosids</taxon>
        <taxon>malvids</taxon>
        <taxon>Brassicales</taxon>
        <taxon>Brassicaceae</taxon>
        <taxon>Camelineae</taxon>
        <taxon>Arabidopsis</taxon>
    </lineage>
</organism>
<feature type="signal peptide" evidence="1">
    <location>
        <begin position="1"/>
        <end position="25"/>
    </location>
</feature>
<feature type="chain" id="PRO_5005941279" description="Aspartyl protease family protein At5g10770" evidence="1">
    <location>
        <begin position="26"/>
        <end position="443"/>
    </location>
</feature>
<feature type="propeptide" id="PRO_0000436023" description="Removed in mature form" evidence="1">
    <location>
        <begin position="444"/>
        <end position="474"/>
    </location>
</feature>
<feature type="domain" description="Peptidase A1" evidence="2">
    <location>
        <begin position="132"/>
        <end position="469"/>
    </location>
</feature>
<feature type="active site" evidence="2">
    <location>
        <position position="150"/>
    </location>
</feature>
<feature type="active site" evidence="2">
    <location>
        <position position="352"/>
    </location>
</feature>
<feature type="lipid moiety-binding region" description="GPI-anchor amidated asparagine" evidence="1">
    <location>
        <position position="443"/>
    </location>
</feature>
<feature type="disulfide bond" evidence="2">
    <location>
        <begin position="391"/>
        <end position="432"/>
    </location>
</feature>
<gene>
    <name evidence="5" type="ordered locus">At5g10770</name>
    <name evidence="7" type="ORF">T30N20_40</name>
</gene>
<proteinExistence type="evidence at transcript level"/>
<sequence>MSINRNLLNIIIILCICLNLGCNDGAQERETDSHTIQVSSLLPSSSSSCVLSPRASTTKSSLHVTHRHGTCSRLNNGKATSPDHVEILRLDQARVNSIHSKLSKKLATDHVSESKSTDLPAKDGSTLGSGNYIVTVGLGTPKNDLSLIFDTGSDLTWTQCQPCVRTCYDQKEPIFNPSKSTSYYNVSCSSAACGSLSSATGNAGSCSASNCIYGIQYGDQSFSVGFLAKEKFTLTNSDVFDGVYFGCGENNQGLFTGVAGLLGLGRDKLSFPSQTATAYNKIFSYCLPSSASYTGHLTFGSAGISRSVKFTPISTITDGTSFYGLNIVAITVGGQKLPIPSTVFSTPGALIDSGTVITRLPPKAYAALRSSFKAKMSKYPTTSGVSILDTCFDLSGFKTVTIPKVAFSFSGGAVVELGSKGIFYVFKISQVCLAFAGNSDDSNAAIFGNVQQQTLEVVYDGAGGRVGFAPNGCS</sequence>
<keyword id="KW-0064">Aspartyl protease</keyword>
<keyword id="KW-1003">Cell membrane</keyword>
<keyword id="KW-1015">Disulfide bond</keyword>
<keyword id="KW-0325">Glycoprotein</keyword>
<keyword id="KW-0336">GPI-anchor</keyword>
<keyword id="KW-0378">Hydrolase</keyword>
<keyword id="KW-0449">Lipoprotein</keyword>
<keyword id="KW-0472">Membrane</keyword>
<keyword id="KW-0645">Protease</keyword>
<keyword id="KW-1185">Reference proteome</keyword>
<keyword id="KW-0732">Signal</keyword>
<accession>Q8S9J6</accession>
<accession>Q9LEW2</accession>
<dbReference type="EC" id="3.4.23.-" evidence="4"/>
<dbReference type="EMBL" id="AL365234">
    <property type="protein sequence ID" value="CAB96832.1"/>
    <property type="status" value="ALT_SEQ"/>
    <property type="molecule type" value="Genomic_DNA"/>
</dbReference>
<dbReference type="EMBL" id="CP002688">
    <property type="protein sequence ID" value="AED91594.1"/>
    <property type="molecule type" value="Genomic_DNA"/>
</dbReference>
<dbReference type="EMBL" id="AY075656">
    <property type="protein sequence ID" value="AAL77663.1"/>
    <property type="molecule type" value="mRNA"/>
</dbReference>
<dbReference type="EMBL" id="BT001004">
    <property type="protein sequence ID" value="AAN46758.1"/>
    <property type="molecule type" value="mRNA"/>
</dbReference>
<dbReference type="PIR" id="T50786">
    <property type="entry name" value="T50786"/>
</dbReference>
<dbReference type="RefSeq" id="NP_196638.2">
    <property type="nucleotide sequence ID" value="NM_121115.4"/>
</dbReference>
<dbReference type="SMR" id="Q8S9J6"/>
<dbReference type="FunCoup" id="Q8S9J6">
    <property type="interactions" value="11"/>
</dbReference>
<dbReference type="STRING" id="3702.Q8S9J6"/>
<dbReference type="MEROPS" id="A01.A15"/>
<dbReference type="GlyGen" id="Q8S9J6">
    <property type="glycosylation" value="1 site"/>
</dbReference>
<dbReference type="iPTMnet" id="Q8S9J6"/>
<dbReference type="PaxDb" id="3702-AT5G10770.1"/>
<dbReference type="ProMEX" id="Q8S9J6"/>
<dbReference type="ProteomicsDB" id="246694"/>
<dbReference type="EnsemblPlants" id="AT5G10770.1">
    <property type="protein sequence ID" value="AT5G10770.1"/>
    <property type="gene ID" value="AT5G10770"/>
</dbReference>
<dbReference type="GeneID" id="830944"/>
<dbReference type="Gramene" id="AT5G10770.1">
    <property type="protein sequence ID" value="AT5G10770.1"/>
    <property type="gene ID" value="AT5G10770"/>
</dbReference>
<dbReference type="KEGG" id="ath:AT5G10770"/>
<dbReference type="Araport" id="AT5G10770"/>
<dbReference type="TAIR" id="AT5G10770"/>
<dbReference type="eggNOG" id="KOG1339">
    <property type="taxonomic scope" value="Eukaryota"/>
</dbReference>
<dbReference type="HOGENOM" id="CLU_005738_5_2_1"/>
<dbReference type="InParanoid" id="Q8S9J6"/>
<dbReference type="OMA" id="AKMSKYP"/>
<dbReference type="PhylomeDB" id="Q8S9J6"/>
<dbReference type="PRO" id="PR:Q8S9J6"/>
<dbReference type="Proteomes" id="UP000006548">
    <property type="component" value="Chromosome 5"/>
</dbReference>
<dbReference type="ExpressionAtlas" id="Q8S9J6">
    <property type="expression patterns" value="baseline and differential"/>
</dbReference>
<dbReference type="GO" id="GO:0005886">
    <property type="term" value="C:plasma membrane"/>
    <property type="evidence" value="ECO:0007669"/>
    <property type="project" value="UniProtKB-SubCell"/>
</dbReference>
<dbReference type="GO" id="GO:0098552">
    <property type="term" value="C:side of membrane"/>
    <property type="evidence" value="ECO:0007669"/>
    <property type="project" value="UniProtKB-KW"/>
</dbReference>
<dbReference type="GO" id="GO:0004190">
    <property type="term" value="F:aspartic-type endopeptidase activity"/>
    <property type="evidence" value="ECO:0007669"/>
    <property type="project" value="UniProtKB-KW"/>
</dbReference>
<dbReference type="GO" id="GO:0006508">
    <property type="term" value="P:proteolysis"/>
    <property type="evidence" value="ECO:0007669"/>
    <property type="project" value="UniProtKB-KW"/>
</dbReference>
<dbReference type="CDD" id="cd05472">
    <property type="entry name" value="cnd41_like"/>
    <property type="match status" value="1"/>
</dbReference>
<dbReference type="FunFam" id="2.40.70.10:FF:000013">
    <property type="entry name" value="Aspartyl protease AED1"/>
    <property type="match status" value="1"/>
</dbReference>
<dbReference type="FunFam" id="2.40.70.10:FF:000021">
    <property type="entry name" value="Aspartyl protease AED1"/>
    <property type="match status" value="1"/>
</dbReference>
<dbReference type="Gene3D" id="2.40.70.10">
    <property type="entry name" value="Acid Proteases"/>
    <property type="match status" value="2"/>
</dbReference>
<dbReference type="InterPro" id="IPR001461">
    <property type="entry name" value="Aspartic_peptidase_A1"/>
</dbReference>
<dbReference type="InterPro" id="IPR033873">
    <property type="entry name" value="CND41-like"/>
</dbReference>
<dbReference type="InterPro" id="IPR033121">
    <property type="entry name" value="PEPTIDASE_A1"/>
</dbReference>
<dbReference type="InterPro" id="IPR021109">
    <property type="entry name" value="Peptidase_aspartic_dom_sf"/>
</dbReference>
<dbReference type="InterPro" id="IPR032799">
    <property type="entry name" value="TAXi_C"/>
</dbReference>
<dbReference type="InterPro" id="IPR032861">
    <property type="entry name" value="TAXi_N"/>
</dbReference>
<dbReference type="PANTHER" id="PTHR13683:SF750">
    <property type="entry name" value="ASPARTYL PROTEASE AED1"/>
    <property type="match status" value="1"/>
</dbReference>
<dbReference type="PANTHER" id="PTHR13683">
    <property type="entry name" value="ASPARTYL PROTEASES"/>
    <property type="match status" value="1"/>
</dbReference>
<dbReference type="Pfam" id="PF14541">
    <property type="entry name" value="TAXi_C"/>
    <property type="match status" value="1"/>
</dbReference>
<dbReference type="Pfam" id="PF14543">
    <property type="entry name" value="TAXi_N"/>
    <property type="match status" value="1"/>
</dbReference>
<dbReference type="PRINTS" id="PR00792">
    <property type="entry name" value="PEPSIN"/>
</dbReference>
<dbReference type="SUPFAM" id="SSF50630">
    <property type="entry name" value="Acid proteases"/>
    <property type="match status" value="1"/>
</dbReference>
<dbReference type="PROSITE" id="PS00141">
    <property type="entry name" value="ASP_PROTEASE"/>
    <property type="match status" value="1"/>
</dbReference>
<dbReference type="PROSITE" id="PS51767">
    <property type="entry name" value="PEPTIDASE_A1"/>
    <property type="match status" value="1"/>
</dbReference>
<protein>
    <recommendedName>
        <fullName>Aspartyl protease family protein At5g10770</fullName>
        <ecNumber evidence="4">3.4.23.-</ecNumber>
    </recommendedName>
</protein>
<comment type="function">
    <text evidence="3">Probably not redundant with AED1 and not involved in restriction of salicylic acid (SA) or systemic acquired resistance (SAR) signaling.</text>
</comment>
<comment type="subcellular location">
    <subcellularLocation>
        <location evidence="1">Cell membrane</location>
        <topology evidence="1">Lipid-anchor</topology>
        <topology evidence="1">GPI-anchor</topology>
    </subcellularLocation>
</comment>
<comment type="induction">
    <text evidence="3">Up-regulated in AED1 mutants.</text>
</comment>
<comment type="similarity">
    <text evidence="4">Belongs to the peptidase A1 family.</text>
</comment>
<comment type="sequence caution" evidence="4">
    <conflict type="erroneous gene model prediction">
        <sequence resource="EMBL-CDS" id="CAB96832"/>
    </conflict>
</comment>
<evidence type="ECO:0000255" key="1"/>
<evidence type="ECO:0000255" key="2">
    <source>
        <dbReference type="PROSITE-ProRule" id="PRU01103"/>
    </source>
</evidence>
<evidence type="ECO:0000269" key="3">
    <source>
    </source>
</evidence>
<evidence type="ECO:0000305" key="4"/>
<evidence type="ECO:0000312" key="5">
    <source>
        <dbReference type="Araport" id="AT5G10770"/>
    </source>
</evidence>
<evidence type="ECO:0000312" key="6">
    <source>
        <dbReference type="EMBL" id="AAL77663.1"/>
    </source>
</evidence>
<evidence type="ECO:0000312" key="7">
    <source>
        <dbReference type="EMBL" id="CAB96832.1"/>
    </source>
</evidence>